<protein>
    <recommendedName>
        <fullName>U3-theraphotoxin-Hs1a</fullName>
        <shortName>U3-TRTX-Hs1a</shortName>
    </recommendedName>
    <alternativeName>
        <fullName>Huwentoxin-6</fullName>
    </alternativeName>
    <alternativeName>
        <fullName>Huwentoxin-VI</fullName>
        <shortName>HwTx-VI</shortName>
    </alternativeName>
</protein>
<keyword id="KW-0903">Direct protein sequencing</keyword>
<keyword id="KW-1015">Disulfide bond</keyword>
<keyword id="KW-0964">Secreted</keyword>
<keyword id="KW-0800">Toxin</keyword>
<reference key="1">
    <citation type="journal article" date="2002" name="Dong Wu Xue Yan Jiu">
        <title>Purification and identification of huwentoxin-VI, a neurotoxin peptide from the venom of S.huwena.</title>
        <authorList>
            <person name="Yi T.F."/>
            <person name="Hu W.J."/>
            <person name="Liang S.-P."/>
        </authorList>
    </citation>
    <scope>PROTEIN SEQUENCE</scope>
    <source>
        <tissue>Venom</tissue>
    </source>
</reference>
<reference key="2">
    <citation type="journal article" date="2004" name="Toxicon">
        <title>An overview of peptide toxins from the venom of the Chinese bird spider Selenocosmia huwena Wang [=Ornithoctonus huwena (Wang)].</title>
        <authorList>
            <person name="Liang S.-P."/>
        </authorList>
    </citation>
    <scope>REVIEW</scope>
</reference>
<name>TXH6_CYRSC</name>
<proteinExistence type="evidence at protein level"/>
<evidence type="ECO:0000250" key="1"/>
<evidence type="ECO:0000305" key="2"/>
<comment type="function">
    <text>Intracerebroventricular injection paralyzes mice. Has no effect on voltage-gated sodium currents.</text>
</comment>
<comment type="subcellular location">
    <subcellularLocation>
        <location>Secreted</location>
    </subcellularLocation>
</comment>
<comment type="tissue specificity">
    <text>Expressed by the venom gland.</text>
</comment>
<comment type="similarity">
    <text evidence="2">Belongs to the neurotoxin 14 (magi-1) family. 01 (HNTX-16) subfamily.</text>
</comment>
<accession>P68420</accession>
<dbReference type="SMR" id="P68420"/>
<dbReference type="ArachnoServer" id="AS000334">
    <property type="toxin name" value="U3-theraphotoxin-Hs1a"/>
</dbReference>
<dbReference type="GO" id="GO:0005576">
    <property type="term" value="C:extracellular region"/>
    <property type="evidence" value="ECO:0007669"/>
    <property type="project" value="UniProtKB-SubCell"/>
</dbReference>
<dbReference type="GO" id="GO:0019871">
    <property type="term" value="F:sodium channel inhibitor activity"/>
    <property type="evidence" value="ECO:0007669"/>
    <property type="project" value="InterPro"/>
</dbReference>
<dbReference type="GO" id="GO:0090729">
    <property type="term" value="F:toxin activity"/>
    <property type="evidence" value="ECO:0007669"/>
    <property type="project" value="UniProtKB-KW"/>
</dbReference>
<dbReference type="InterPro" id="IPR012625">
    <property type="entry name" value="Hwtx-2-like"/>
</dbReference>
<dbReference type="InterPro" id="IPR012627">
    <property type="entry name" value="Toxin_22"/>
</dbReference>
<dbReference type="Pfam" id="PF08092">
    <property type="entry name" value="Toxin_22"/>
    <property type="match status" value="1"/>
</dbReference>
<dbReference type="PROSITE" id="PS60022">
    <property type="entry name" value="HWTX_2"/>
    <property type="match status" value="1"/>
</dbReference>
<feature type="chain" id="PRO_0000087652" description="U3-theraphotoxin-Hs1a">
    <location>
        <begin position="1"/>
        <end position="41"/>
    </location>
</feature>
<feature type="disulfide bond" evidence="1">
    <location>
        <begin position="2"/>
        <end position="16"/>
    </location>
</feature>
<feature type="disulfide bond" evidence="1">
    <location>
        <begin position="9"/>
        <end position="37"/>
    </location>
</feature>
<feature type="disulfide bond" evidence="1">
    <location>
        <begin position="17"/>
        <end position="40"/>
    </location>
</feature>
<sequence length="41" mass="4632">NCIGEQVPCDENDPRCCSGLVVLKKTLHGIWIKSSYCYKCK</sequence>
<organism>
    <name type="scientific">Cyriopagopus schmidti</name>
    <name type="common">Chinese bird spider</name>
    <name type="synonym">Haplopelma schmidti</name>
    <dbReference type="NCBI Taxonomy" id="29017"/>
    <lineage>
        <taxon>Eukaryota</taxon>
        <taxon>Metazoa</taxon>
        <taxon>Ecdysozoa</taxon>
        <taxon>Arthropoda</taxon>
        <taxon>Chelicerata</taxon>
        <taxon>Arachnida</taxon>
        <taxon>Araneae</taxon>
        <taxon>Mygalomorphae</taxon>
        <taxon>Theraphosidae</taxon>
        <taxon>Cyriopagopus</taxon>
    </lineage>
</organism>